<evidence type="ECO:0000250" key="1"/>
<evidence type="ECO:0000305" key="2"/>
<comment type="function">
    <text evidence="1">Catalyzes the NAD(H)-dependent interconversion of D-fructose and D-mannitol in the mannitol metabolic pathway.</text>
</comment>
<comment type="catalytic activity">
    <reaction>
        <text>D-mannitol + NAD(+) = D-fructose + NADH + H(+)</text>
        <dbReference type="Rhea" id="RHEA:12084"/>
        <dbReference type="ChEBI" id="CHEBI:15378"/>
        <dbReference type="ChEBI" id="CHEBI:16899"/>
        <dbReference type="ChEBI" id="CHEBI:37721"/>
        <dbReference type="ChEBI" id="CHEBI:57540"/>
        <dbReference type="ChEBI" id="CHEBI:57945"/>
        <dbReference type="EC" id="1.1.1.67"/>
    </reaction>
</comment>
<comment type="subunit">
    <text evidence="1">Monomer.</text>
</comment>
<comment type="similarity">
    <text evidence="2">Belongs to the mannitol dehydrogenase family.</text>
</comment>
<feature type="chain" id="PRO_0000371543" description="Mannitol 2-dehydrogenase">
    <location>
        <begin position="1"/>
        <end position="502"/>
    </location>
</feature>
<feature type="binding site" evidence="1">
    <location>
        <begin position="37"/>
        <end position="48"/>
    </location>
    <ligand>
        <name>NAD(+)</name>
        <dbReference type="ChEBI" id="CHEBI:57540"/>
    </ligand>
</feature>
<sequence>MAPLKLNSRNLAQIFAAGKDRVKVPTYQRGSAVKEGIVHVGVGGFHRAHLAVYVDQLMQNHGVNDYAICGVGLQPFDAAMRDALRSQDHLYTVIERSAKGSFAHVVGSINSYLFAPDNREAVIAKMAHPDTHIVSLTITESGYYYNENTHELQAEHPDIQFDLDPANEKTPRTTFGFLYAALARRHQQGLRPFTVLSCDNMQKNGSITRHMLESFARLRNPELAKWIAEQGAFPNAMVDRITPQTSPTDKKALAETIGIEDSWPVVTEPFMQWVLEDQFSDGRPPFEKAGAQVVKNVHDVEQFEKHKLRLLNGSHSAIGYAGQMAGFEYVHEVMEHPLYNRFVWQMMQEEVKPLLPEIPGVDIDEYCKTLMERFSNPTIMDQLPRICLNASGKIPQFIMPSIAEAIWVTGPFRRLCFVAAAWFRYLNGIDDSGKTFNVDDPMREELQAKARAGGTNPAELLNVKSLFGDDLRSDKRFLQEITTAMEAIARDGIMKTMPKYVD</sequence>
<reference key="1">
    <citation type="submission" date="2005-09" db="EMBL/GenBank/DDBJ databases">
        <title>Annotation of the Aspergillus terreus NIH2624 genome.</title>
        <authorList>
            <person name="Birren B.W."/>
            <person name="Lander E.S."/>
            <person name="Galagan J.E."/>
            <person name="Nusbaum C."/>
            <person name="Devon K."/>
            <person name="Henn M."/>
            <person name="Ma L.-J."/>
            <person name="Jaffe D.B."/>
            <person name="Butler J."/>
            <person name="Alvarez P."/>
            <person name="Gnerre S."/>
            <person name="Grabherr M."/>
            <person name="Kleber M."/>
            <person name="Mauceli E.W."/>
            <person name="Brockman W."/>
            <person name="Rounsley S."/>
            <person name="Young S.K."/>
            <person name="LaButti K."/>
            <person name="Pushparaj V."/>
            <person name="DeCaprio D."/>
            <person name="Crawford M."/>
            <person name="Koehrsen M."/>
            <person name="Engels R."/>
            <person name="Montgomery P."/>
            <person name="Pearson M."/>
            <person name="Howarth C."/>
            <person name="Larson L."/>
            <person name="Luoma S."/>
            <person name="White J."/>
            <person name="Alvarado L."/>
            <person name="Kodira C.D."/>
            <person name="Zeng Q."/>
            <person name="Oleary S."/>
            <person name="Yandava C."/>
            <person name="Denning D.W."/>
            <person name="Nierman W.C."/>
            <person name="Milne T."/>
            <person name="Madden K."/>
        </authorList>
    </citation>
    <scope>NUCLEOTIDE SEQUENCE [LARGE SCALE GENOMIC DNA]</scope>
    <source>
        <strain>NIH 2624 / FGSC A1156</strain>
    </source>
</reference>
<accession>Q0CYP4</accession>
<protein>
    <recommendedName>
        <fullName>Mannitol 2-dehydrogenase</fullName>
        <shortName>M2DH</shortName>
        <shortName>MDH</shortName>
        <ecNumber>1.1.1.67</ecNumber>
    </recommendedName>
</protein>
<keyword id="KW-0520">NAD</keyword>
<keyword id="KW-0560">Oxidoreductase</keyword>
<keyword id="KW-1185">Reference proteome</keyword>
<name>M2DH_ASPTN</name>
<organism>
    <name type="scientific">Aspergillus terreus (strain NIH 2624 / FGSC A1156)</name>
    <dbReference type="NCBI Taxonomy" id="341663"/>
    <lineage>
        <taxon>Eukaryota</taxon>
        <taxon>Fungi</taxon>
        <taxon>Dikarya</taxon>
        <taxon>Ascomycota</taxon>
        <taxon>Pezizomycotina</taxon>
        <taxon>Eurotiomycetes</taxon>
        <taxon>Eurotiomycetidae</taxon>
        <taxon>Eurotiales</taxon>
        <taxon>Aspergillaceae</taxon>
        <taxon>Aspergillus</taxon>
        <taxon>Aspergillus subgen. Circumdati</taxon>
    </lineage>
</organism>
<gene>
    <name type="ORF">ATEG_01190</name>
</gene>
<proteinExistence type="inferred from homology"/>
<dbReference type="EC" id="1.1.1.67"/>
<dbReference type="EMBL" id="CH476595">
    <property type="protein sequence ID" value="EAU37947.1"/>
    <property type="molecule type" value="Genomic_DNA"/>
</dbReference>
<dbReference type="RefSeq" id="XP_001208555.1">
    <property type="nucleotide sequence ID" value="XM_001208555.1"/>
</dbReference>
<dbReference type="SMR" id="Q0CYP4"/>
<dbReference type="STRING" id="341663.Q0CYP4"/>
<dbReference type="EnsemblFungi" id="EAU37947">
    <property type="protein sequence ID" value="EAU37947"/>
    <property type="gene ID" value="ATEG_01190"/>
</dbReference>
<dbReference type="GeneID" id="4316123"/>
<dbReference type="VEuPathDB" id="FungiDB:ATEG_01190"/>
<dbReference type="eggNOG" id="ENOG502QT30">
    <property type="taxonomic scope" value="Eukaryota"/>
</dbReference>
<dbReference type="HOGENOM" id="CLU_027324_0_1_1"/>
<dbReference type="OMA" id="IVASWAR"/>
<dbReference type="OrthoDB" id="418169at2759"/>
<dbReference type="Proteomes" id="UP000007963">
    <property type="component" value="Unassembled WGS sequence"/>
</dbReference>
<dbReference type="GO" id="GO:0050086">
    <property type="term" value="F:mannitol 2-dehydrogenase activity"/>
    <property type="evidence" value="ECO:0007669"/>
    <property type="project" value="UniProtKB-EC"/>
</dbReference>
<dbReference type="GO" id="GO:0046029">
    <property type="term" value="F:mannitol dehydrogenase activity"/>
    <property type="evidence" value="ECO:0007669"/>
    <property type="project" value="TreeGrafter"/>
</dbReference>
<dbReference type="FunFam" id="3.40.50.720:FF:000129">
    <property type="entry name" value="D-mannonate oxidoreductase"/>
    <property type="match status" value="1"/>
</dbReference>
<dbReference type="FunFam" id="1.10.1040.10:FF:000028">
    <property type="entry name" value="Mannitol 2-dehydrogenase"/>
    <property type="match status" value="1"/>
</dbReference>
<dbReference type="Gene3D" id="1.10.1040.10">
    <property type="entry name" value="N-(1-d-carboxylethyl)-l-norvaline Dehydrogenase, domain 2"/>
    <property type="match status" value="1"/>
</dbReference>
<dbReference type="Gene3D" id="3.40.50.720">
    <property type="entry name" value="NAD(P)-binding Rossmann-like Domain"/>
    <property type="match status" value="1"/>
</dbReference>
<dbReference type="InterPro" id="IPR008927">
    <property type="entry name" value="6-PGluconate_DH-like_C_sf"/>
</dbReference>
<dbReference type="InterPro" id="IPR013328">
    <property type="entry name" value="6PGD_dom2"/>
</dbReference>
<dbReference type="InterPro" id="IPR000669">
    <property type="entry name" value="Mannitol_DH"/>
</dbReference>
<dbReference type="InterPro" id="IPR050988">
    <property type="entry name" value="Mannitol_DH/Oxidoreductase"/>
</dbReference>
<dbReference type="InterPro" id="IPR013118">
    <property type="entry name" value="Mannitol_DH_C"/>
</dbReference>
<dbReference type="InterPro" id="IPR013131">
    <property type="entry name" value="Mannitol_DH_N"/>
</dbReference>
<dbReference type="InterPro" id="IPR036291">
    <property type="entry name" value="NAD(P)-bd_dom_sf"/>
</dbReference>
<dbReference type="PANTHER" id="PTHR43362:SF1">
    <property type="entry name" value="MANNITOL DEHYDROGENASE 2-RELATED"/>
    <property type="match status" value="1"/>
</dbReference>
<dbReference type="PANTHER" id="PTHR43362">
    <property type="entry name" value="MANNITOL DEHYDROGENASE DSF1-RELATED"/>
    <property type="match status" value="1"/>
</dbReference>
<dbReference type="Pfam" id="PF01232">
    <property type="entry name" value="Mannitol_dh"/>
    <property type="match status" value="1"/>
</dbReference>
<dbReference type="Pfam" id="PF08125">
    <property type="entry name" value="Mannitol_dh_C"/>
    <property type="match status" value="1"/>
</dbReference>
<dbReference type="PRINTS" id="PR00084">
    <property type="entry name" value="MTLDHDRGNASE"/>
</dbReference>
<dbReference type="SUPFAM" id="SSF48179">
    <property type="entry name" value="6-phosphogluconate dehydrogenase C-terminal domain-like"/>
    <property type="match status" value="1"/>
</dbReference>
<dbReference type="SUPFAM" id="SSF51735">
    <property type="entry name" value="NAD(P)-binding Rossmann-fold domains"/>
    <property type="match status" value="1"/>
</dbReference>